<keyword id="KW-0963">Cytoplasm</keyword>
<keyword id="KW-0324">Glycolysis</keyword>
<keyword id="KW-0520">NAD</keyword>
<keyword id="KW-0547">Nucleotide-binding</keyword>
<keyword id="KW-0560">Oxidoreductase</keyword>
<name>G3P_BACFR</name>
<dbReference type="EC" id="1.2.1.12" evidence="2"/>
<dbReference type="EMBL" id="AP006841">
    <property type="protein sequence ID" value="BAD47717.1"/>
    <property type="molecule type" value="Genomic_DNA"/>
</dbReference>
<dbReference type="EMBL" id="U27541">
    <property type="protein sequence ID" value="AAA82598.1"/>
    <property type="molecule type" value="Genomic_DNA"/>
</dbReference>
<dbReference type="RefSeq" id="WP_005785248.1">
    <property type="nucleotide sequence ID" value="NZ_UYXF01000032.1"/>
</dbReference>
<dbReference type="RefSeq" id="YP_098251.1">
    <property type="nucleotide sequence ID" value="NC_006347.1"/>
</dbReference>
<dbReference type="SMR" id="Q59199"/>
<dbReference type="STRING" id="295405.BF0967"/>
<dbReference type="GeneID" id="60365855"/>
<dbReference type="KEGG" id="bfr:BF0967"/>
<dbReference type="PATRIC" id="fig|295405.11.peg.967"/>
<dbReference type="HOGENOM" id="CLU_030140_0_3_10"/>
<dbReference type="OrthoDB" id="9803304at2"/>
<dbReference type="UniPathway" id="UPA00109">
    <property type="reaction ID" value="UER00184"/>
</dbReference>
<dbReference type="Proteomes" id="UP000002197">
    <property type="component" value="Chromosome"/>
</dbReference>
<dbReference type="GO" id="GO:0005737">
    <property type="term" value="C:cytoplasm"/>
    <property type="evidence" value="ECO:0007669"/>
    <property type="project" value="UniProtKB-SubCell"/>
</dbReference>
<dbReference type="GO" id="GO:0004365">
    <property type="term" value="F:glyceraldehyde-3-phosphate dehydrogenase (NAD+) (phosphorylating) activity"/>
    <property type="evidence" value="ECO:0007669"/>
    <property type="project" value="UniProtKB-EC"/>
</dbReference>
<dbReference type="GO" id="GO:0051287">
    <property type="term" value="F:NAD binding"/>
    <property type="evidence" value="ECO:0007669"/>
    <property type="project" value="InterPro"/>
</dbReference>
<dbReference type="GO" id="GO:0050661">
    <property type="term" value="F:NADP binding"/>
    <property type="evidence" value="ECO:0007669"/>
    <property type="project" value="InterPro"/>
</dbReference>
<dbReference type="GO" id="GO:0006006">
    <property type="term" value="P:glucose metabolic process"/>
    <property type="evidence" value="ECO:0007669"/>
    <property type="project" value="InterPro"/>
</dbReference>
<dbReference type="GO" id="GO:0006096">
    <property type="term" value="P:glycolytic process"/>
    <property type="evidence" value="ECO:0007669"/>
    <property type="project" value="UniProtKB-UniPathway"/>
</dbReference>
<dbReference type="CDD" id="cd18126">
    <property type="entry name" value="GAPDH_I_C"/>
    <property type="match status" value="1"/>
</dbReference>
<dbReference type="CDD" id="cd05214">
    <property type="entry name" value="GAPDH_I_N"/>
    <property type="match status" value="1"/>
</dbReference>
<dbReference type="FunFam" id="3.30.360.10:FF:000010">
    <property type="entry name" value="Glyceraldehyde-3-phosphate dehydrogenase"/>
    <property type="match status" value="1"/>
</dbReference>
<dbReference type="FunFam" id="3.40.50.720:FF:000001">
    <property type="entry name" value="Glyceraldehyde-3-phosphate dehydrogenase"/>
    <property type="match status" value="1"/>
</dbReference>
<dbReference type="Gene3D" id="3.30.360.10">
    <property type="entry name" value="Dihydrodipicolinate Reductase, domain 2"/>
    <property type="match status" value="1"/>
</dbReference>
<dbReference type="Gene3D" id="3.40.50.720">
    <property type="entry name" value="NAD(P)-binding Rossmann-like Domain"/>
    <property type="match status" value="1"/>
</dbReference>
<dbReference type="InterPro" id="IPR020831">
    <property type="entry name" value="GlycerAld/Erythrose_P_DH"/>
</dbReference>
<dbReference type="InterPro" id="IPR020830">
    <property type="entry name" value="GlycerAld_3-P_DH_AS"/>
</dbReference>
<dbReference type="InterPro" id="IPR020829">
    <property type="entry name" value="GlycerAld_3-P_DH_cat"/>
</dbReference>
<dbReference type="InterPro" id="IPR020828">
    <property type="entry name" value="GlycerAld_3-P_DH_NAD(P)-bd"/>
</dbReference>
<dbReference type="InterPro" id="IPR006424">
    <property type="entry name" value="Glyceraldehyde-3-P_DH_1"/>
</dbReference>
<dbReference type="InterPro" id="IPR036291">
    <property type="entry name" value="NAD(P)-bd_dom_sf"/>
</dbReference>
<dbReference type="NCBIfam" id="TIGR01534">
    <property type="entry name" value="GAPDH-I"/>
    <property type="match status" value="1"/>
</dbReference>
<dbReference type="PANTHER" id="PTHR10836">
    <property type="entry name" value="GLYCERALDEHYDE 3-PHOSPHATE DEHYDROGENASE"/>
    <property type="match status" value="1"/>
</dbReference>
<dbReference type="PANTHER" id="PTHR10836:SF76">
    <property type="entry name" value="GLYCERALDEHYDE-3-PHOSPHATE DEHYDROGENASE-RELATED"/>
    <property type="match status" value="1"/>
</dbReference>
<dbReference type="Pfam" id="PF02800">
    <property type="entry name" value="Gp_dh_C"/>
    <property type="match status" value="1"/>
</dbReference>
<dbReference type="Pfam" id="PF00044">
    <property type="entry name" value="Gp_dh_N"/>
    <property type="match status" value="1"/>
</dbReference>
<dbReference type="PIRSF" id="PIRSF000149">
    <property type="entry name" value="GAP_DH"/>
    <property type="match status" value="1"/>
</dbReference>
<dbReference type="PRINTS" id="PR00078">
    <property type="entry name" value="G3PDHDRGNASE"/>
</dbReference>
<dbReference type="SMART" id="SM00846">
    <property type="entry name" value="Gp_dh_N"/>
    <property type="match status" value="1"/>
</dbReference>
<dbReference type="SUPFAM" id="SSF55347">
    <property type="entry name" value="Glyceraldehyde-3-phosphate dehydrogenase-like, C-terminal domain"/>
    <property type="match status" value="1"/>
</dbReference>
<dbReference type="SUPFAM" id="SSF51735">
    <property type="entry name" value="NAD(P)-binding Rossmann-fold domains"/>
    <property type="match status" value="1"/>
</dbReference>
<dbReference type="PROSITE" id="PS00071">
    <property type="entry name" value="GAPDH"/>
    <property type="match status" value="1"/>
</dbReference>
<reference key="1">
    <citation type="journal article" date="2004" name="Proc. Natl. Acad. Sci. U.S.A.">
        <title>Genomic analysis of Bacteroides fragilis reveals extensive DNA inversions regulating cell surface adaptation.</title>
        <authorList>
            <person name="Kuwahara T."/>
            <person name="Yamashita A."/>
            <person name="Hirakawa H."/>
            <person name="Nakayama H."/>
            <person name="Toh H."/>
            <person name="Okada N."/>
            <person name="Kuhara S."/>
            <person name="Hattori M."/>
            <person name="Hayashi T."/>
            <person name="Ohnishi Y."/>
        </authorList>
    </citation>
    <scope>NUCLEOTIDE SEQUENCE [LARGE SCALE GENOMIC DNA]</scope>
    <source>
        <strain>YCH46</strain>
    </source>
</reference>
<reference key="2">
    <citation type="submission" date="1995-05" db="EMBL/GenBank/DDBJ databases">
        <title>Glycolytic enzymes in Bacteroides fragilis.</title>
        <authorList>
            <person name="Morin L."/>
            <person name="Muller M."/>
        </authorList>
    </citation>
    <scope>NUCLEOTIDE SEQUENCE [GENOMIC DNA] OF 13-311</scope>
    <source>
        <strain>IRL8</strain>
    </source>
</reference>
<evidence type="ECO:0000250" key="1">
    <source>
        <dbReference type="UniProtKB" id="P00362"/>
    </source>
</evidence>
<evidence type="ECO:0000250" key="2">
    <source>
        <dbReference type="UniProtKB" id="P09124"/>
    </source>
</evidence>
<evidence type="ECO:0000250" key="3">
    <source>
        <dbReference type="UniProtKB" id="Q6GIL8"/>
    </source>
</evidence>
<evidence type="ECO:0000305" key="4"/>
<gene>
    <name type="primary">gap</name>
    <name type="ordered locus">BF0967</name>
</gene>
<feature type="chain" id="PRO_0000145631" description="Glyceraldehyde-3-phosphate dehydrogenase">
    <location>
        <begin position="1"/>
        <end position="333"/>
    </location>
</feature>
<feature type="active site" description="Nucleophile" evidence="1">
    <location>
        <position position="151"/>
    </location>
</feature>
<feature type="binding site" evidence="1">
    <location>
        <begin position="11"/>
        <end position="12"/>
    </location>
    <ligand>
        <name>NAD(+)</name>
        <dbReference type="ChEBI" id="CHEBI:57540"/>
    </ligand>
</feature>
<feature type="binding site" evidence="1">
    <location>
        <position position="35"/>
    </location>
    <ligand>
        <name>NAD(+)</name>
        <dbReference type="ChEBI" id="CHEBI:57540"/>
    </ligand>
</feature>
<feature type="binding site" evidence="1">
    <location>
        <position position="79"/>
    </location>
    <ligand>
        <name>NAD(+)</name>
        <dbReference type="ChEBI" id="CHEBI:57540"/>
    </ligand>
</feature>
<feature type="binding site" evidence="1">
    <location>
        <position position="121"/>
    </location>
    <ligand>
        <name>NAD(+)</name>
        <dbReference type="ChEBI" id="CHEBI:57540"/>
    </ligand>
</feature>
<feature type="binding site" evidence="1">
    <location>
        <begin position="150"/>
        <end position="152"/>
    </location>
    <ligand>
        <name>D-glyceraldehyde 3-phosphate</name>
        <dbReference type="ChEBI" id="CHEBI:59776"/>
    </ligand>
</feature>
<feature type="binding site" evidence="1">
    <location>
        <position position="181"/>
    </location>
    <ligand>
        <name>D-glyceraldehyde 3-phosphate</name>
        <dbReference type="ChEBI" id="CHEBI:59776"/>
    </ligand>
</feature>
<feature type="binding site" evidence="1">
    <location>
        <begin position="210"/>
        <end position="211"/>
    </location>
    <ligand>
        <name>D-glyceraldehyde 3-phosphate</name>
        <dbReference type="ChEBI" id="CHEBI:59776"/>
    </ligand>
</feature>
<feature type="binding site" evidence="1">
    <location>
        <position position="233"/>
    </location>
    <ligand>
        <name>D-glyceraldehyde 3-phosphate</name>
        <dbReference type="ChEBI" id="CHEBI:59776"/>
    </ligand>
</feature>
<feature type="binding site" evidence="1">
    <location>
        <position position="315"/>
    </location>
    <ligand>
        <name>NAD(+)</name>
        <dbReference type="ChEBI" id="CHEBI:57540"/>
    </ligand>
</feature>
<feature type="site" description="Activates thiol group during catalysis" evidence="3">
    <location>
        <position position="178"/>
    </location>
</feature>
<feature type="sequence conflict" description="In Ref. 2; AAA82598." evidence="4" ref="2">
    <original>D</original>
    <variation>N</variation>
    <location>
        <position position="104"/>
    </location>
</feature>
<organism>
    <name type="scientific">Bacteroides fragilis (strain YCH46)</name>
    <dbReference type="NCBI Taxonomy" id="295405"/>
    <lineage>
        <taxon>Bacteria</taxon>
        <taxon>Pseudomonadati</taxon>
        <taxon>Bacteroidota</taxon>
        <taxon>Bacteroidia</taxon>
        <taxon>Bacteroidales</taxon>
        <taxon>Bacteroidaceae</taxon>
        <taxon>Bacteroides</taxon>
    </lineage>
</organism>
<accession>Q59199</accession>
<accession>Q64XQ9</accession>
<proteinExistence type="inferred from homology"/>
<protein>
    <recommendedName>
        <fullName evidence="1">Glyceraldehyde-3-phosphate dehydrogenase</fullName>
        <shortName evidence="1">GAPDH</shortName>
        <ecNumber evidence="2">1.2.1.12</ecNumber>
    </recommendedName>
    <alternativeName>
        <fullName evidence="1">NAD-dependent glyceraldehyde-3-phosphate dehydrogenase</fullName>
    </alternativeName>
</protein>
<sequence length="333" mass="35663">MIKVGINGFGRIGRMVFRAAVKNFGNDIQIVGINDLLDAEYLAYMLKYDSVHGRFEGEVAVEDGALIVNGNKIRLTAEMDPANLKWNEVDADVVVESTGFFLTDETARKHIQAGAKKVIMSAPSKDSTPMFVYGVNHTSYAGQDIISNASCTTNCLAPIAKVLNDKFGIVKGLMTTVHAATATQKTVDGPSKKDWRGGRGILENIIPSSTGAAKAVGKVLPVLNGKLTGMAFRVPTSDVSVVDLTVVLEKAATMAEINAAMKEASEGELKGILGYTEDAVVSTDFRGCANTSIYDSKAGISLDSNFAKVVSWYDNEWGYSNKVCEMARVIAAK</sequence>
<comment type="function">
    <text evidence="1">Catalyzes the oxidative phosphorylation of glyceraldehyde 3-phosphate (G3P) to 1,3-bisphosphoglycerate (BPG) using the cofactor NAD. The first reaction step involves the formation of a hemiacetal intermediate between G3P and a cysteine residue, and this hemiacetal intermediate is then oxidized to a thioester, with concomitant reduction of NAD to NADH. The reduced NADH is then exchanged with the second NAD, and the thioester is attacked by a nucleophilic inorganic phosphate to produce BPG.</text>
</comment>
<comment type="catalytic activity">
    <reaction evidence="2">
        <text>D-glyceraldehyde 3-phosphate + phosphate + NAD(+) = (2R)-3-phospho-glyceroyl phosphate + NADH + H(+)</text>
        <dbReference type="Rhea" id="RHEA:10300"/>
        <dbReference type="ChEBI" id="CHEBI:15378"/>
        <dbReference type="ChEBI" id="CHEBI:43474"/>
        <dbReference type="ChEBI" id="CHEBI:57540"/>
        <dbReference type="ChEBI" id="CHEBI:57604"/>
        <dbReference type="ChEBI" id="CHEBI:57945"/>
        <dbReference type="ChEBI" id="CHEBI:59776"/>
        <dbReference type="EC" id="1.2.1.12"/>
    </reaction>
</comment>
<comment type="pathway">
    <text evidence="4">Carbohydrate degradation; glycolysis; pyruvate from D-glyceraldehyde 3-phosphate: step 1/5.</text>
</comment>
<comment type="subunit">
    <text evidence="1">Homotetramer.</text>
</comment>
<comment type="subcellular location">
    <subcellularLocation>
        <location evidence="4">Cytoplasm</location>
    </subcellularLocation>
</comment>
<comment type="similarity">
    <text evidence="4">Belongs to the glyceraldehyde-3-phosphate dehydrogenase family.</text>
</comment>